<sequence length="342" mass="38515">MNTNDFDFYLPEELIAQTPLEKRDASKLLVIDHKNKTMTDSHFDHILDELKPGDALVMNNTRVLPARLYGEKQDTHGHVELLLLKNTEGDQWEVLAKPAKRLRVGTKVSFGDGRLIATVTKELEHGGRIVEFSYDGIFLEVLESLGEMPLPPYIHEKLEDRDRYQTVYAKENGSAAAPTAGLHFTKELLEKIETKGVKLVYLTLHVGLGTFRPVSVDNLDEHEMHSEFYQLSKEAADTLNAVKESGGRIVAVGTTSIRTLETIGSKFNGELKADSGWTNIFIKPGYQFKVVDAFSTNFHLPKSTLVMLVSAFAGRDFVLEAYNHAVEERYRFFSFGDAMFVK</sequence>
<dbReference type="EC" id="2.4.99.17" evidence="1"/>
<dbReference type="EMBL" id="AE009948">
    <property type="protein sequence ID" value="AAM99684.1"/>
    <property type="molecule type" value="Genomic_DNA"/>
</dbReference>
<dbReference type="RefSeq" id="NP_687812.1">
    <property type="nucleotide sequence ID" value="NC_004116.1"/>
</dbReference>
<dbReference type="RefSeq" id="WP_001095273.1">
    <property type="nucleotide sequence ID" value="NC_004116.1"/>
</dbReference>
<dbReference type="SMR" id="Q8E0D7"/>
<dbReference type="STRING" id="208435.SAG0797"/>
<dbReference type="KEGG" id="sag:SAG0797"/>
<dbReference type="PATRIC" id="fig|208435.3.peg.804"/>
<dbReference type="HOGENOM" id="CLU_039110_1_0_9"/>
<dbReference type="OrthoDB" id="9805933at2"/>
<dbReference type="UniPathway" id="UPA00392"/>
<dbReference type="Proteomes" id="UP000000821">
    <property type="component" value="Chromosome"/>
</dbReference>
<dbReference type="GO" id="GO:0005737">
    <property type="term" value="C:cytoplasm"/>
    <property type="evidence" value="ECO:0007669"/>
    <property type="project" value="UniProtKB-SubCell"/>
</dbReference>
<dbReference type="GO" id="GO:0051075">
    <property type="term" value="F:S-adenosylmethionine:tRNA ribosyltransferase-isomerase activity"/>
    <property type="evidence" value="ECO:0007669"/>
    <property type="project" value="UniProtKB-EC"/>
</dbReference>
<dbReference type="GO" id="GO:0008616">
    <property type="term" value="P:queuosine biosynthetic process"/>
    <property type="evidence" value="ECO:0007669"/>
    <property type="project" value="UniProtKB-UniRule"/>
</dbReference>
<dbReference type="GO" id="GO:0002099">
    <property type="term" value="P:tRNA wobble guanine modification"/>
    <property type="evidence" value="ECO:0007669"/>
    <property type="project" value="TreeGrafter"/>
</dbReference>
<dbReference type="FunFam" id="2.40.10.240:FF:000002">
    <property type="entry name" value="S-adenosylmethionine:tRNA ribosyltransferase-isomerase"/>
    <property type="match status" value="1"/>
</dbReference>
<dbReference type="FunFam" id="3.40.1780.10:FF:000001">
    <property type="entry name" value="S-adenosylmethionine:tRNA ribosyltransferase-isomerase"/>
    <property type="match status" value="1"/>
</dbReference>
<dbReference type="Gene3D" id="2.40.10.240">
    <property type="entry name" value="QueA-like"/>
    <property type="match status" value="1"/>
</dbReference>
<dbReference type="Gene3D" id="3.40.1780.10">
    <property type="entry name" value="QueA-like"/>
    <property type="match status" value="1"/>
</dbReference>
<dbReference type="HAMAP" id="MF_00113">
    <property type="entry name" value="QueA"/>
    <property type="match status" value="1"/>
</dbReference>
<dbReference type="InterPro" id="IPR003699">
    <property type="entry name" value="QueA"/>
</dbReference>
<dbReference type="InterPro" id="IPR042118">
    <property type="entry name" value="QueA_dom1"/>
</dbReference>
<dbReference type="InterPro" id="IPR042119">
    <property type="entry name" value="QueA_dom2"/>
</dbReference>
<dbReference type="InterPro" id="IPR036100">
    <property type="entry name" value="QueA_sf"/>
</dbReference>
<dbReference type="NCBIfam" id="NF001140">
    <property type="entry name" value="PRK00147.1"/>
    <property type="match status" value="1"/>
</dbReference>
<dbReference type="NCBIfam" id="TIGR00113">
    <property type="entry name" value="queA"/>
    <property type="match status" value="1"/>
</dbReference>
<dbReference type="PANTHER" id="PTHR30307">
    <property type="entry name" value="S-ADENOSYLMETHIONINE:TRNA RIBOSYLTRANSFERASE-ISOMERASE"/>
    <property type="match status" value="1"/>
</dbReference>
<dbReference type="PANTHER" id="PTHR30307:SF0">
    <property type="entry name" value="S-ADENOSYLMETHIONINE:TRNA RIBOSYLTRANSFERASE-ISOMERASE"/>
    <property type="match status" value="1"/>
</dbReference>
<dbReference type="Pfam" id="PF02547">
    <property type="entry name" value="Queuosine_synth"/>
    <property type="match status" value="1"/>
</dbReference>
<dbReference type="SUPFAM" id="SSF111337">
    <property type="entry name" value="QueA-like"/>
    <property type="match status" value="1"/>
</dbReference>
<feature type="chain" id="PRO_0000165447" description="S-adenosylmethionine:tRNA ribosyltransferase-isomerase">
    <location>
        <begin position="1"/>
        <end position="342"/>
    </location>
</feature>
<accession>Q8E0D7</accession>
<name>QUEA_STRA5</name>
<proteinExistence type="inferred from homology"/>
<evidence type="ECO:0000255" key="1">
    <source>
        <dbReference type="HAMAP-Rule" id="MF_00113"/>
    </source>
</evidence>
<gene>
    <name evidence="1" type="primary">queA</name>
    <name type="ordered locus">SAG0797</name>
</gene>
<protein>
    <recommendedName>
        <fullName evidence="1">S-adenosylmethionine:tRNA ribosyltransferase-isomerase</fullName>
        <ecNumber evidence="1">2.4.99.17</ecNumber>
    </recommendedName>
    <alternativeName>
        <fullName evidence="1">Queuosine biosynthesis protein QueA</fullName>
    </alternativeName>
</protein>
<reference key="1">
    <citation type="journal article" date="2002" name="Proc. Natl. Acad. Sci. U.S.A.">
        <title>Complete genome sequence and comparative genomic analysis of an emerging human pathogen, serotype V Streptococcus agalactiae.</title>
        <authorList>
            <person name="Tettelin H."/>
            <person name="Masignani V."/>
            <person name="Cieslewicz M.J."/>
            <person name="Eisen J.A."/>
            <person name="Peterson S.N."/>
            <person name="Wessels M.R."/>
            <person name="Paulsen I.T."/>
            <person name="Nelson K.E."/>
            <person name="Margarit I."/>
            <person name="Read T.D."/>
            <person name="Madoff L.C."/>
            <person name="Wolf A.M."/>
            <person name="Beanan M.J."/>
            <person name="Brinkac L.M."/>
            <person name="Daugherty S.C."/>
            <person name="DeBoy R.T."/>
            <person name="Durkin A.S."/>
            <person name="Kolonay J.F."/>
            <person name="Madupu R."/>
            <person name="Lewis M.R."/>
            <person name="Radune D."/>
            <person name="Fedorova N.B."/>
            <person name="Scanlan D."/>
            <person name="Khouri H.M."/>
            <person name="Mulligan S."/>
            <person name="Carty H.A."/>
            <person name="Cline R.T."/>
            <person name="Van Aken S.E."/>
            <person name="Gill J."/>
            <person name="Scarselli M."/>
            <person name="Mora M."/>
            <person name="Iacobini E.T."/>
            <person name="Brettoni C."/>
            <person name="Galli G."/>
            <person name="Mariani M."/>
            <person name="Vegni F."/>
            <person name="Maione D."/>
            <person name="Rinaudo D."/>
            <person name="Rappuoli R."/>
            <person name="Telford J.L."/>
            <person name="Kasper D.L."/>
            <person name="Grandi G."/>
            <person name="Fraser C.M."/>
        </authorList>
    </citation>
    <scope>NUCLEOTIDE SEQUENCE [LARGE SCALE GENOMIC DNA]</scope>
    <source>
        <strain>ATCC BAA-611 / 2603 V/R</strain>
    </source>
</reference>
<comment type="function">
    <text evidence="1">Transfers and isomerizes the ribose moiety from AdoMet to the 7-aminomethyl group of 7-deazaguanine (preQ1-tRNA) to give epoxyqueuosine (oQ-tRNA).</text>
</comment>
<comment type="catalytic activity">
    <reaction evidence="1">
        <text>7-aminomethyl-7-carbaguanosine(34) in tRNA + S-adenosyl-L-methionine = epoxyqueuosine(34) in tRNA + adenine + L-methionine + 2 H(+)</text>
        <dbReference type="Rhea" id="RHEA:32155"/>
        <dbReference type="Rhea" id="RHEA-COMP:10342"/>
        <dbReference type="Rhea" id="RHEA-COMP:18582"/>
        <dbReference type="ChEBI" id="CHEBI:15378"/>
        <dbReference type="ChEBI" id="CHEBI:16708"/>
        <dbReference type="ChEBI" id="CHEBI:57844"/>
        <dbReference type="ChEBI" id="CHEBI:59789"/>
        <dbReference type="ChEBI" id="CHEBI:82833"/>
        <dbReference type="ChEBI" id="CHEBI:194443"/>
        <dbReference type="EC" id="2.4.99.17"/>
    </reaction>
</comment>
<comment type="pathway">
    <text evidence="1">tRNA modification; tRNA-queuosine biosynthesis.</text>
</comment>
<comment type="subunit">
    <text evidence="1">Monomer.</text>
</comment>
<comment type="subcellular location">
    <subcellularLocation>
        <location evidence="1">Cytoplasm</location>
    </subcellularLocation>
</comment>
<comment type="similarity">
    <text evidence="1">Belongs to the QueA family.</text>
</comment>
<organism>
    <name type="scientific">Streptococcus agalactiae serotype V (strain ATCC BAA-611 / 2603 V/R)</name>
    <dbReference type="NCBI Taxonomy" id="208435"/>
    <lineage>
        <taxon>Bacteria</taxon>
        <taxon>Bacillati</taxon>
        <taxon>Bacillota</taxon>
        <taxon>Bacilli</taxon>
        <taxon>Lactobacillales</taxon>
        <taxon>Streptococcaceae</taxon>
        <taxon>Streptococcus</taxon>
    </lineage>
</organism>
<keyword id="KW-0963">Cytoplasm</keyword>
<keyword id="KW-0671">Queuosine biosynthesis</keyword>
<keyword id="KW-1185">Reference proteome</keyword>
<keyword id="KW-0949">S-adenosyl-L-methionine</keyword>
<keyword id="KW-0808">Transferase</keyword>